<name>RPO3_SACI2</name>
<accession>C3MJP7</accession>
<reference key="1">
    <citation type="journal article" date="2009" name="Proc. Natl. Acad. Sci. U.S.A.">
        <title>Biogeography of the Sulfolobus islandicus pan-genome.</title>
        <authorList>
            <person name="Reno M.L."/>
            <person name="Held N.L."/>
            <person name="Fields C.J."/>
            <person name="Burke P.V."/>
            <person name="Whitaker R.J."/>
        </authorList>
    </citation>
    <scope>NUCLEOTIDE SEQUENCE [LARGE SCALE GENOMIC DNA]</scope>
    <source>
        <strain>L.S.2.15 / Lassen #1</strain>
    </source>
</reference>
<proteinExistence type="inferred from homology"/>
<organism>
    <name type="scientific">Saccharolobus islandicus (strain L.S.2.15 / Lassen #1)</name>
    <name type="common">Sulfolobus islandicus</name>
    <dbReference type="NCBI Taxonomy" id="429572"/>
    <lineage>
        <taxon>Archaea</taxon>
        <taxon>Thermoproteota</taxon>
        <taxon>Thermoprotei</taxon>
        <taxon>Sulfolobales</taxon>
        <taxon>Sulfolobaceae</taxon>
        <taxon>Saccharolobus</taxon>
    </lineage>
</organism>
<gene>
    <name evidence="1" type="primary">rpo3</name>
    <name evidence="1" type="synonym">rpoD</name>
    <name type="ordered locus">LS215_2213</name>
</gene>
<evidence type="ECO:0000255" key="1">
    <source>
        <dbReference type="HAMAP-Rule" id="MF_00320"/>
    </source>
</evidence>
<evidence type="ECO:0000305" key="2"/>
<comment type="function">
    <text evidence="1">DNA-dependent RNA polymerase (RNAP) catalyzes the transcription of DNA into RNA using the four ribonucleoside triphosphates as substrates.</text>
</comment>
<comment type="catalytic activity">
    <reaction evidence="1">
        <text>RNA(n) + a ribonucleoside 5'-triphosphate = RNA(n+1) + diphosphate</text>
        <dbReference type="Rhea" id="RHEA:21248"/>
        <dbReference type="Rhea" id="RHEA-COMP:14527"/>
        <dbReference type="Rhea" id="RHEA-COMP:17342"/>
        <dbReference type="ChEBI" id="CHEBI:33019"/>
        <dbReference type="ChEBI" id="CHEBI:61557"/>
        <dbReference type="ChEBI" id="CHEBI:140395"/>
        <dbReference type="EC" id="2.7.7.6"/>
    </reaction>
</comment>
<comment type="cofactor">
    <cofactor evidence="1">
        <name>[3Fe-4S] cluster</name>
        <dbReference type="ChEBI" id="CHEBI:21137"/>
    </cofactor>
    <text evidence="1">Binds 1 [3Fe-4S] cluster.</text>
</comment>
<comment type="subunit">
    <text evidence="1">Part of the RNA polymerase complex.</text>
</comment>
<comment type="subcellular location">
    <subcellularLocation>
        <location evidence="1">Cytoplasm</location>
    </subcellularLocation>
</comment>
<comment type="similarity">
    <text evidence="1">Belongs to the archaeal Rpo3/eukaryotic RPB3 RNA polymerase subunit family.</text>
</comment>
<comment type="caution">
    <text evidence="2">X-ray crystallography in other archaea shows this protein binds a 3Fe-4S cluster, although a 4Fe-4S cluster has been suggested to be present in this protein.</text>
</comment>
<keyword id="KW-0003">3Fe-4S</keyword>
<keyword id="KW-0963">Cytoplasm</keyword>
<keyword id="KW-0240">DNA-directed RNA polymerase</keyword>
<keyword id="KW-0408">Iron</keyword>
<keyword id="KW-0411">Iron-sulfur</keyword>
<keyword id="KW-0479">Metal-binding</keyword>
<keyword id="KW-0548">Nucleotidyltransferase</keyword>
<keyword id="KW-0804">Transcription</keyword>
<keyword id="KW-0808">Transferase</keyword>
<sequence>MSINLLHKDDKRIDLVFEGYPLEFVNAIRRATMLYVPVMSIDDVYFIENNSPLYDEILAHRLALIPFTSEEALDTYRWPEECIECTENCEKCYTKIYIEAEALNEPKMLYSKDIKSEDPSIVPISGDIPIVLLGANQKISLEARLRLGYGKEHAKFIPVSLAIVRYYPKVEILGNCEKAATVCPEGVFELKDGKLSVKNELACTLCEECLRYCNGLIRISSIEDKYILELESVGSLKPERILLEAGKSIIRKIEELEKKLVEVIK</sequence>
<protein>
    <recommendedName>
        <fullName evidence="1">DNA-directed RNA polymerase subunit Rpo3</fullName>
        <ecNumber evidence="1">2.7.7.6</ecNumber>
    </recommendedName>
    <alternativeName>
        <fullName evidence="1">DNA-directed RNA polymerase subunit D</fullName>
    </alternativeName>
</protein>
<feature type="chain" id="PRO_1000205116" description="DNA-directed RNA polymerase subunit Rpo3">
    <location>
        <begin position="1"/>
        <end position="265"/>
    </location>
</feature>
<feature type="binding site" evidence="1">
    <location>
        <position position="203"/>
    </location>
    <ligand>
        <name>[3Fe-4S] cluster</name>
        <dbReference type="ChEBI" id="CHEBI:21137"/>
    </ligand>
</feature>
<feature type="binding site" evidence="1">
    <location>
        <position position="206"/>
    </location>
    <ligand>
        <name>[3Fe-4S] cluster</name>
        <dbReference type="ChEBI" id="CHEBI:21137"/>
    </ligand>
</feature>
<feature type="binding site" evidence="1">
    <location>
        <position position="209"/>
    </location>
    <ligand>
        <name>[3Fe-4S] cluster</name>
        <dbReference type="ChEBI" id="CHEBI:21137"/>
    </ligand>
</feature>
<dbReference type="EC" id="2.7.7.6" evidence="1"/>
<dbReference type="EMBL" id="CP001399">
    <property type="protein sequence ID" value="ACP36200.1"/>
    <property type="molecule type" value="Genomic_DNA"/>
</dbReference>
<dbReference type="RefSeq" id="WP_012714155.1">
    <property type="nucleotide sequence ID" value="NC_012589.1"/>
</dbReference>
<dbReference type="SMR" id="C3MJP7"/>
<dbReference type="GeneID" id="7808075"/>
<dbReference type="KEGG" id="sis:LS215_2213"/>
<dbReference type="HOGENOM" id="CLU_038421_3_1_2"/>
<dbReference type="OrthoDB" id="84933at2157"/>
<dbReference type="Proteomes" id="UP000001747">
    <property type="component" value="Chromosome"/>
</dbReference>
<dbReference type="GO" id="GO:0005737">
    <property type="term" value="C:cytoplasm"/>
    <property type="evidence" value="ECO:0007669"/>
    <property type="project" value="UniProtKB-SubCell"/>
</dbReference>
<dbReference type="GO" id="GO:0000428">
    <property type="term" value="C:DNA-directed RNA polymerase complex"/>
    <property type="evidence" value="ECO:0007669"/>
    <property type="project" value="UniProtKB-KW"/>
</dbReference>
<dbReference type="GO" id="GO:0051538">
    <property type="term" value="F:3 iron, 4 sulfur cluster binding"/>
    <property type="evidence" value="ECO:0007669"/>
    <property type="project" value="UniProtKB-KW"/>
</dbReference>
<dbReference type="GO" id="GO:0003677">
    <property type="term" value="F:DNA binding"/>
    <property type="evidence" value="ECO:0007669"/>
    <property type="project" value="UniProtKB-UniRule"/>
</dbReference>
<dbReference type="GO" id="GO:0003899">
    <property type="term" value="F:DNA-directed RNA polymerase activity"/>
    <property type="evidence" value="ECO:0007669"/>
    <property type="project" value="UniProtKB-UniRule"/>
</dbReference>
<dbReference type="GO" id="GO:0046872">
    <property type="term" value="F:metal ion binding"/>
    <property type="evidence" value="ECO:0007669"/>
    <property type="project" value="UniProtKB-KW"/>
</dbReference>
<dbReference type="GO" id="GO:0046983">
    <property type="term" value="F:protein dimerization activity"/>
    <property type="evidence" value="ECO:0007669"/>
    <property type="project" value="InterPro"/>
</dbReference>
<dbReference type="GO" id="GO:0006351">
    <property type="term" value="P:DNA-templated transcription"/>
    <property type="evidence" value="ECO:0007669"/>
    <property type="project" value="UniProtKB-UniRule"/>
</dbReference>
<dbReference type="CDD" id="cd07030">
    <property type="entry name" value="RNAP_D"/>
    <property type="match status" value="1"/>
</dbReference>
<dbReference type="Gene3D" id="3.30.70.20">
    <property type="match status" value="1"/>
</dbReference>
<dbReference type="Gene3D" id="2.170.120.12">
    <property type="entry name" value="DNA-directed RNA polymerase, insert domain"/>
    <property type="match status" value="1"/>
</dbReference>
<dbReference type="Gene3D" id="3.30.1360.10">
    <property type="entry name" value="RNA polymerase, RBP11-like subunit"/>
    <property type="match status" value="1"/>
</dbReference>
<dbReference type="HAMAP" id="MF_00320">
    <property type="entry name" value="RNApol_arch_Rpo3"/>
    <property type="match status" value="1"/>
</dbReference>
<dbReference type="InterPro" id="IPR001514">
    <property type="entry name" value="DNA-dir_RNA_pol_30-40kDasu_CS"/>
</dbReference>
<dbReference type="InterPro" id="IPR011262">
    <property type="entry name" value="DNA-dir_RNA_pol_insert"/>
</dbReference>
<dbReference type="InterPro" id="IPR011263">
    <property type="entry name" value="DNA-dir_RNA_pol_RpoA/D/Rpb3"/>
</dbReference>
<dbReference type="InterPro" id="IPR036603">
    <property type="entry name" value="RBP11-like"/>
</dbReference>
<dbReference type="InterPro" id="IPR022842">
    <property type="entry name" value="RNAP_Rpo3/Rpb3/RPAC1"/>
</dbReference>
<dbReference type="InterPro" id="IPR036643">
    <property type="entry name" value="RNApol_insert_sf"/>
</dbReference>
<dbReference type="InterPro" id="IPR050518">
    <property type="entry name" value="Rpo3/RPB3_RNA_Pol_subunit"/>
</dbReference>
<dbReference type="NCBIfam" id="NF001988">
    <property type="entry name" value="PRK00783.1"/>
    <property type="match status" value="1"/>
</dbReference>
<dbReference type="PANTHER" id="PTHR11800">
    <property type="entry name" value="DNA-DIRECTED RNA POLYMERASE"/>
    <property type="match status" value="1"/>
</dbReference>
<dbReference type="PANTHER" id="PTHR11800:SF2">
    <property type="entry name" value="DNA-DIRECTED RNA POLYMERASE II SUBUNIT RPB3"/>
    <property type="match status" value="1"/>
</dbReference>
<dbReference type="Pfam" id="PF01000">
    <property type="entry name" value="RNA_pol_A_bac"/>
    <property type="match status" value="1"/>
</dbReference>
<dbReference type="Pfam" id="PF01193">
    <property type="entry name" value="RNA_pol_L"/>
    <property type="match status" value="1"/>
</dbReference>
<dbReference type="SMART" id="SM00662">
    <property type="entry name" value="RPOLD"/>
    <property type="match status" value="1"/>
</dbReference>
<dbReference type="SUPFAM" id="SSF56553">
    <property type="entry name" value="Insert subdomain of RNA polymerase alpha subunit"/>
    <property type="match status" value="1"/>
</dbReference>
<dbReference type="SUPFAM" id="SSF55257">
    <property type="entry name" value="RBP11-like subunits of RNA polymerase"/>
    <property type="match status" value="1"/>
</dbReference>
<dbReference type="PROSITE" id="PS00446">
    <property type="entry name" value="RNA_POL_D_30KD"/>
    <property type="match status" value="1"/>
</dbReference>